<sequence>MTCTLEKVLADAKSLVERLRDHDSAAEILIEQTTLLNKRVEAMKQYQEEIEVLNQVARHRPRSTLVMGIQQENRQIRELQQENKELHTSLEEHQSALELIMSKYREQVFRLLMASKKEDPTIVTQLREQHTNEMQAHIEKINEMATVMRKAIEVDEGRLCEDEERIKRLELENSGLRELLGISREAFLLLKRDDTSDSTSLSPLLTSTDISLRKS</sequence>
<protein>
    <recommendedName>
        <fullName>FGFR1 oncogene partner 2 homolog</fullName>
    </recommendedName>
</protein>
<reference key="1">
    <citation type="journal article" date="2013" name="Nature">
        <title>The zebrafish reference genome sequence and its relationship to the human genome.</title>
        <authorList>
            <person name="Howe K."/>
            <person name="Clark M.D."/>
            <person name="Torroja C.F."/>
            <person name="Torrance J."/>
            <person name="Berthelot C."/>
            <person name="Muffato M."/>
            <person name="Collins J.E."/>
            <person name="Humphray S."/>
            <person name="McLaren K."/>
            <person name="Matthews L."/>
            <person name="McLaren S."/>
            <person name="Sealy I."/>
            <person name="Caccamo M."/>
            <person name="Churcher C."/>
            <person name="Scott C."/>
            <person name="Barrett J.C."/>
            <person name="Koch R."/>
            <person name="Rauch G.J."/>
            <person name="White S."/>
            <person name="Chow W."/>
            <person name="Kilian B."/>
            <person name="Quintais L.T."/>
            <person name="Guerra-Assuncao J.A."/>
            <person name="Zhou Y."/>
            <person name="Gu Y."/>
            <person name="Yen J."/>
            <person name="Vogel J.H."/>
            <person name="Eyre T."/>
            <person name="Redmond S."/>
            <person name="Banerjee R."/>
            <person name="Chi J."/>
            <person name="Fu B."/>
            <person name="Langley E."/>
            <person name="Maguire S.F."/>
            <person name="Laird G.K."/>
            <person name="Lloyd D."/>
            <person name="Kenyon E."/>
            <person name="Donaldson S."/>
            <person name="Sehra H."/>
            <person name="Almeida-King J."/>
            <person name="Loveland J."/>
            <person name="Trevanion S."/>
            <person name="Jones M."/>
            <person name="Quail M."/>
            <person name="Willey D."/>
            <person name="Hunt A."/>
            <person name="Burton J."/>
            <person name="Sims S."/>
            <person name="McLay K."/>
            <person name="Plumb B."/>
            <person name="Davis J."/>
            <person name="Clee C."/>
            <person name="Oliver K."/>
            <person name="Clark R."/>
            <person name="Riddle C."/>
            <person name="Elliot D."/>
            <person name="Threadgold G."/>
            <person name="Harden G."/>
            <person name="Ware D."/>
            <person name="Begum S."/>
            <person name="Mortimore B."/>
            <person name="Kerry G."/>
            <person name="Heath P."/>
            <person name="Phillimore B."/>
            <person name="Tracey A."/>
            <person name="Corby N."/>
            <person name="Dunn M."/>
            <person name="Johnson C."/>
            <person name="Wood J."/>
            <person name="Clark S."/>
            <person name="Pelan S."/>
            <person name="Griffiths G."/>
            <person name="Smith M."/>
            <person name="Glithero R."/>
            <person name="Howden P."/>
            <person name="Barker N."/>
            <person name="Lloyd C."/>
            <person name="Stevens C."/>
            <person name="Harley J."/>
            <person name="Holt K."/>
            <person name="Panagiotidis G."/>
            <person name="Lovell J."/>
            <person name="Beasley H."/>
            <person name="Henderson C."/>
            <person name="Gordon D."/>
            <person name="Auger K."/>
            <person name="Wright D."/>
            <person name="Collins J."/>
            <person name="Raisen C."/>
            <person name="Dyer L."/>
            <person name="Leung K."/>
            <person name="Robertson L."/>
            <person name="Ambridge K."/>
            <person name="Leongamornlert D."/>
            <person name="McGuire S."/>
            <person name="Gilderthorp R."/>
            <person name="Griffiths C."/>
            <person name="Manthravadi D."/>
            <person name="Nichol S."/>
            <person name="Barker G."/>
            <person name="Whitehead S."/>
            <person name="Kay M."/>
            <person name="Brown J."/>
            <person name="Murnane C."/>
            <person name="Gray E."/>
            <person name="Humphries M."/>
            <person name="Sycamore N."/>
            <person name="Barker D."/>
            <person name="Saunders D."/>
            <person name="Wallis J."/>
            <person name="Babbage A."/>
            <person name="Hammond S."/>
            <person name="Mashreghi-Mohammadi M."/>
            <person name="Barr L."/>
            <person name="Martin S."/>
            <person name="Wray P."/>
            <person name="Ellington A."/>
            <person name="Matthews N."/>
            <person name="Ellwood M."/>
            <person name="Woodmansey R."/>
            <person name="Clark G."/>
            <person name="Cooper J."/>
            <person name="Tromans A."/>
            <person name="Grafham D."/>
            <person name="Skuce C."/>
            <person name="Pandian R."/>
            <person name="Andrews R."/>
            <person name="Harrison E."/>
            <person name="Kimberley A."/>
            <person name="Garnett J."/>
            <person name="Fosker N."/>
            <person name="Hall R."/>
            <person name="Garner P."/>
            <person name="Kelly D."/>
            <person name="Bird C."/>
            <person name="Palmer S."/>
            <person name="Gehring I."/>
            <person name="Berger A."/>
            <person name="Dooley C.M."/>
            <person name="Ersan-Urun Z."/>
            <person name="Eser C."/>
            <person name="Geiger H."/>
            <person name="Geisler M."/>
            <person name="Karotki L."/>
            <person name="Kirn A."/>
            <person name="Konantz J."/>
            <person name="Konantz M."/>
            <person name="Oberlander M."/>
            <person name="Rudolph-Geiger S."/>
            <person name="Teucke M."/>
            <person name="Lanz C."/>
            <person name="Raddatz G."/>
            <person name="Osoegawa K."/>
            <person name="Zhu B."/>
            <person name="Rapp A."/>
            <person name="Widaa S."/>
            <person name="Langford C."/>
            <person name="Yang F."/>
            <person name="Schuster S.C."/>
            <person name="Carter N.P."/>
            <person name="Harrow J."/>
            <person name="Ning Z."/>
            <person name="Herrero J."/>
            <person name="Searle S.M."/>
            <person name="Enright A."/>
            <person name="Geisler R."/>
            <person name="Plasterk R.H."/>
            <person name="Lee C."/>
            <person name="Westerfield M."/>
            <person name="de Jong P.J."/>
            <person name="Zon L.I."/>
            <person name="Postlethwait J.H."/>
            <person name="Nusslein-Volhard C."/>
            <person name="Hubbard T.J."/>
            <person name="Roest Crollius H."/>
            <person name="Rogers J."/>
            <person name="Stemple D.L."/>
        </authorList>
    </citation>
    <scope>NUCLEOTIDE SEQUENCE [LARGE SCALE GENOMIC DNA]</scope>
    <source>
        <strain>Tuebingen</strain>
    </source>
</reference>
<reference key="2">
    <citation type="submission" date="2003-06" db="EMBL/GenBank/DDBJ databases">
        <authorList>
            <consortium name="NIH - Zebrafish Gene Collection (ZGC) project"/>
        </authorList>
    </citation>
    <scope>NUCLEOTIDE SEQUENCE [LARGE SCALE MRNA]</scope>
    <source>
        <tissue>Kidney</tissue>
    </source>
</reference>
<evidence type="ECO:0000250" key="1"/>
<evidence type="ECO:0000255" key="2"/>
<evidence type="ECO:0000305" key="3"/>
<proteinExistence type="evidence at transcript level"/>
<dbReference type="EMBL" id="CR847994">
    <property type="protein sequence ID" value="CAK04410.1"/>
    <property type="molecule type" value="Genomic_DNA"/>
</dbReference>
<dbReference type="EMBL" id="BC053266">
    <property type="protein sequence ID" value="AAH53266.1"/>
    <property type="molecule type" value="mRNA"/>
</dbReference>
<dbReference type="RefSeq" id="NP_956249.1">
    <property type="nucleotide sequence ID" value="NM_199955.1"/>
</dbReference>
<dbReference type="SMR" id="Q7T338"/>
<dbReference type="FunCoup" id="Q7T338">
    <property type="interactions" value="1750"/>
</dbReference>
<dbReference type="STRING" id="7955.ENSDARP00000005747"/>
<dbReference type="PaxDb" id="7955-ENSDARP00000005747"/>
<dbReference type="Ensembl" id="ENSDART00000021139">
    <property type="protein sequence ID" value="ENSDARP00000005747"/>
    <property type="gene ID" value="ENSDARG00000009657"/>
</dbReference>
<dbReference type="GeneID" id="335511"/>
<dbReference type="KEGG" id="dre:335511"/>
<dbReference type="AGR" id="ZFIN:ZDB-GENE-030131-7451"/>
<dbReference type="CTD" id="26127"/>
<dbReference type="ZFIN" id="ZDB-GENE-030131-7451">
    <property type="gene designation" value="fgfr1op2"/>
</dbReference>
<dbReference type="eggNOG" id="ENOG502QSAD">
    <property type="taxonomic scope" value="Eukaryota"/>
</dbReference>
<dbReference type="HOGENOM" id="CLU_073167_1_0_1"/>
<dbReference type="InParanoid" id="Q7T338"/>
<dbReference type="OMA" id="KYRQHTE"/>
<dbReference type="OrthoDB" id="21214at2759"/>
<dbReference type="PhylomeDB" id="Q7T338"/>
<dbReference type="TreeFam" id="TF324337"/>
<dbReference type="PRO" id="PR:Q7T338"/>
<dbReference type="Proteomes" id="UP000000437">
    <property type="component" value="Chromosome 4"/>
</dbReference>
<dbReference type="Bgee" id="ENSDARG00000009657">
    <property type="expression patterns" value="Expressed in granulocyte and 27 other cell types or tissues"/>
</dbReference>
<dbReference type="GO" id="GO:0005737">
    <property type="term" value="C:cytoplasm"/>
    <property type="evidence" value="ECO:0007669"/>
    <property type="project" value="UniProtKB-SubCell"/>
</dbReference>
<dbReference type="GO" id="GO:0009611">
    <property type="term" value="P:response to wounding"/>
    <property type="evidence" value="ECO:0000318"/>
    <property type="project" value="GO_Central"/>
</dbReference>
<dbReference type="InterPro" id="IPR008555">
    <property type="entry name" value="SIKE"/>
</dbReference>
<dbReference type="PANTHER" id="PTHR12186:SF3">
    <property type="entry name" value="FGFR1 ONCOGENE PARTNER 2"/>
    <property type="match status" value="1"/>
</dbReference>
<dbReference type="PANTHER" id="PTHR12186">
    <property type="entry name" value="SIKE FAMILY MEMBER"/>
    <property type="match status" value="1"/>
</dbReference>
<dbReference type="Pfam" id="PF05769">
    <property type="entry name" value="SIKE"/>
    <property type="match status" value="1"/>
</dbReference>
<comment type="subcellular location">
    <subcellularLocation>
        <location evidence="1">Cytoplasm</location>
    </subcellularLocation>
</comment>
<comment type="similarity">
    <text evidence="3">Belongs to the SIKE family.</text>
</comment>
<accession>Q7T338</accession>
<gene>
    <name type="primary">fgfr1op2</name>
    <name type="ORF">si:ch211-203h15.2</name>
    <name type="ORF">zgc:64126</name>
</gene>
<feature type="chain" id="PRO_0000299046" description="FGFR1 oncogene partner 2 homolog">
    <location>
        <begin position="1"/>
        <end position="215"/>
    </location>
</feature>
<feature type="coiled-coil region" evidence="2">
    <location>
        <begin position="35"/>
        <end position="183"/>
    </location>
</feature>
<keyword id="KW-0175">Coiled coil</keyword>
<keyword id="KW-0963">Cytoplasm</keyword>
<keyword id="KW-1185">Reference proteome</keyword>
<organism>
    <name type="scientific">Danio rerio</name>
    <name type="common">Zebrafish</name>
    <name type="synonym">Brachydanio rerio</name>
    <dbReference type="NCBI Taxonomy" id="7955"/>
    <lineage>
        <taxon>Eukaryota</taxon>
        <taxon>Metazoa</taxon>
        <taxon>Chordata</taxon>
        <taxon>Craniata</taxon>
        <taxon>Vertebrata</taxon>
        <taxon>Euteleostomi</taxon>
        <taxon>Actinopterygii</taxon>
        <taxon>Neopterygii</taxon>
        <taxon>Teleostei</taxon>
        <taxon>Ostariophysi</taxon>
        <taxon>Cypriniformes</taxon>
        <taxon>Danionidae</taxon>
        <taxon>Danioninae</taxon>
        <taxon>Danio</taxon>
    </lineage>
</organism>
<name>FGOP2_DANRE</name>